<comment type="function">
    <text evidence="1">Catalyzes the attachment of glutamate to tRNA(Glu) in a two-step reaction: glutamate is first activated by ATP to form Glu-AMP and then transferred to the acceptor end of tRNA(Glu).</text>
</comment>
<comment type="catalytic activity">
    <reaction evidence="1">
        <text>tRNA(Glu) + L-glutamate + ATP = L-glutamyl-tRNA(Glu) + AMP + diphosphate</text>
        <dbReference type="Rhea" id="RHEA:23540"/>
        <dbReference type="Rhea" id="RHEA-COMP:9663"/>
        <dbReference type="Rhea" id="RHEA-COMP:9680"/>
        <dbReference type="ChEBI" id="CHEBI:29985"/>
        <dbReference type="ChEBI" id="CHEBI:30616"/>
        <dbReference type="ChEBI" id="CHEBI:33019"/>
        <dbReference type="ChEBI" id="CHEBI:78442"/>
        <dbReference type="ChEBI" id="CHEBI:78520"/>
        <dbReference type="ChEBI" id="CHEBI:456215"/>
        <dbReference type="EC" id="6.1.1.17"/>
    </reaction>
</comment>
<comment type="subunit">
    <text evidence="1">Monomer.</text>
</comment>
<comment type="subcellular location">
    <subcellularLocation>
        <location evidence="1">Cytoplasm</location>
    </subcellularLocation>
</comment>
<comment type="similarity">
    <text evidence="1">Belongs to the class-I aminoacyl-tRNA synthetase family. Glutamate--tRNA ligase type 1 subfamily.</text>
</comment>
<organism>
    <name type="scientific">Streptococcus pyogenes serotype M12 (strain MGAS9429)</name>
    <dbReference type="NCBI Taxonomy" id="370551"/>
    <lineage>
        <taxon>Bacteria</taxon>
        <taxon>Bacillati</taxon>
        <taxon>Bacillota</taxon>
        <taxon>Bacilli</taxon>
        <taxon>Lactobacillales</taxon>
        <taxon>Streptococcaceae</taxon>
        <taxon>Streptococcus</taxon>
    </lineage>
</organism>
<protein>
    <recommendedName>
        <fullName evidence="1">Glutamate--tRNA ligase</fullName>
        <ecNumber evidence="1">6.1.1.17</ecNumber>
    </recommendedName>
    <alternativeName>
        <fullName evidence="1">Glutamyl-tRNA synthetase</fullName>
        <shortName evidence="1">GluRS</shortName>
    </alternativeName>
</protein>
<evidence type="ECO:0000255" key="1">
    <source>
        <dbReference type="HAMAP-Rule" id="MF_00022"/>
    </source>
</evidence>
<accession>Q1JNK7</accession>
<gene>
    <name evidence="1" type="primary">gltX</name>
    <name type="ordered locus">MGAS9429_Spy0204</name>
</gene>
<reference key="1">
    <citation type="journal article" date="2006" name="Proc. Natl. Acad. Sci. U.S.A.">
        <title>Molecular genetic anatomy of inter- and intraserotype variation in the human bacterial pathogen group A Streptococcus.</title>
        <authorList>
            <person name="Beres S.B."/>
            <person name="Richter E.W."/>
            <person name="Nagiec M.J."/>
            <person name="Sumby P."/>
            <person name="Porcella S.F."/>
            <person name="DeLeo F.R."/>
            <person name="Musser J.M."/>
        </authorList>
    </citation>
    <scope>NUCLEOTIDE SEQUENCE [LARGE SCALE GENOMIC DNA]</scope>
    <source>
        <strain>MGAS9429</strain>
    </source>
</reference>
<name>SYE_STRPC</name>
<proteinExistence type="inferred from homology"/>
<keyword id="KW-0030">Aminoacyl-tRNA synthetase</keyword>
<keyword id="KW-0067">ATP-binding</keyword>
<keyword id="KW-0963">Cytoplasm</keyword>
<keyword id="KW-0436">Ligase</keyword>
<keyword id="KW-0547">Nucleotide-binding</keyword>
<keyword id="KW-0648">Protein biosynthesis</keyword>
<sequence>MSKPIRVRYAPSPTGLLHIGNARTALFNYLYARRHGGTFIIRIEDTDRKRHVEDGERSQLENLKWLGMDWDESPETHENYRQSERLALYQQYIDQLLAEGKAYKSYVTEEELAAERERQEAAGETPRYINEFIGMSADEKAKYIAEREAAGIVPTVRLAVNESGIYKWTDMVKGDIEFEGGNIGGDWVIQKKDGYPTYNFAVVVDDHDMQISHVIRGDDHIANTPKQLMVYEALGWEAPEFGHMTLIINSETGKKLSKRDTNTLQFIEDYRKKGYMPEAVFNFIALLGWNPGGEEEIFSREQLIALFDENRLSKSPAAFDQKKMDWMSNEYLKHADFETVYALCKPFLEEAGRLTEKAEKLVELYKPQLKSADEIIPLTDLFFSDFPELTEAEKEVMAGETVSTVLQAFKAKLEAMSDEDFKPENIFPQIKAVQKETGIKGKNLFMPIRIAVSGEMHGPELPNTIYLLGRDKSIEHIKNML</sequence>
<feature type="chain" id="PRO_1000001971" description="Glutamate--tRNA ligase">
    <location>
        <begin position="1"/>
        <end position="481"/>
    </location>
</feature>
<feature type="short sequence motif" description="'HIGH' region" evidence="1">
    <location>
        <begin position="11"/>
        <end position="21"/>
    </location>
</feature>
<feature type="short sequence motif" description="'KMSKS' region" evidence="1">
    <location>
        <begin position="255"/>
        <end position="259"/>
    </location>
</feature>
<feature type="binding site" evidence="1">
    <location>
        <position position="258"/>
    </location>
    <ligand>
        <name>ATP</name>
        <dbReference type="ChEBI" id="CHEBI:30616"/>
    </ligand>
</feature>
<dbReference type="EC" id="6.1.1.17" evidence="1"/>
<dbReference type="EMBL" id="CP000259">
    <property type="protein sequence ID" value="ABF31392.1"/>
    <property type="molecule type" value="Genomic_DNA"/>
</dbReference>
<dbReference type="RefSeq" id="WP_002986105.1">
    <property type="nucleotide sequence ID" value="NC_008021.1"/>
</dbReference>
<dbReference type="SMR" id="Q1JNK7"/>
<dbReference type="KEGG" id="spk:MGAS9429_Spy0204"/>
<dbReference type="HOGENOM" id="CLU_015768_6_1_9"/>
<dbReference type="Proteomes" id="UP000002433">
    <property type="component" value="Chromosome"/>
</dbReference>
<dbReference type="GO" id="GO:0005829">
    <property type="term" value="C:cytosol"/>
    <property type="evidence" value="ECO:0007669"/>
    <property type="project" value="TreeGrafter"/>
</dbReference>
<dbReference type="GO" id="GO:0005524">
    <property type="term" value="F:ATP binding"/>
    <property type="evidence" value="ECO:0007669"/>
    <property type="project" value="UniProtKB-UniRule"/>
</dbReference>
<dbReference type="GO" id="GO:0004818">
    <property type="term" value="F:glutamate-tRNA ligase activity"/>
    <property type="evidence" value="ECO:0007669"/>
    <property type="project" value="UniProtKB-UniRule"/>
</dbReference>
<dbReference type="GO" id="GO:0000049">
    <property type="term" value="F:tRNA binding"/>
    <property type="evidence" value="ECO:0007669"/>
    <property type="project" value="InterPro"/>
</dbReference>
<dbReference type="GO" id="GO:0008270">
    <property type="term" value="F:zinc ion binding"/>
    <property type="evidence" value="ECO:0007669"/>
    <property type="project" value="InterPro"/>
</dbReference>
<dbReference type="GO" id="GO:0006424">
    <property type="term" value="P:glutamyl-tRNA aminoacylation"/>
    <property type="evidence" value="ECO:0007669"/>
    <property type="project" value="UniProtKB-UniRule"/>
</dbReference>
<dbReference type="CDD" id="cd00808">
    <property type="entry name" value="GluRS_core"/>
    <property type="match status" value="1"/>
</dbReference>
<dbReference type="FunFam" id="1.10.10.350:FF:000002">
    <property type="entry name" value="Glutamate--tRNA ligase"/>
    <property type="match status" value="1"/>
</dbReference>
<dbReference type="FunFam" id="3.40.50.620:FF:000007">
    <property type="entry name" value="Glutamate--tRNA ligase"/>
    <property type="match status" value="1"/>
</dbReference>
<dbReference type="Gene3D" id="1.10.10.350">
    <property type="match status" value="1"/>
</dbReference>
<dbReference type="Gene3D" id="3.40.50.620">
    <property type="entry name" value="HUPs"/>
    <property type="match status" value="1"/>
</dbReference>
<dbReference type="HAMAP" id="MF_00022">
    <property type="entry name" value="Glu_tRNA_synth_type1"/>
    <property type="match status" value="1"/>
</dbReference>
<dbReference type="InterPro" id="IPR045462">
    <property type="entry name" value="aa-tRNA-synth_I_cd-bd"/>
</dbReference>
<dbReference type="InterPro" id="IPR020751">
    <property type="entry name" value="aa-tRNA-synth_I_codon-bd_sub2"/>
</dbReference>
<dbReference type="InterPro" id="IPR001412">
    <property type="entry name" value="aa-tRNA-synth_I_CS"/>
</dbReference>
<dbReference type="InterPro" id="IPR008925">
    <property type="entry name" value="aa_tRNA-synth_I_cd-bd_sf"/>
</dbReference>
<dbReference type="InterPro" id="IPR004527">
    <property type="entry name" value="Glu-tRNA-ligase_bac/mito"/>
</dbReference>
<dbReference type="InterPro" id="IPR000924">
    <property type="entry name" value="Glu/Gln-tRNA-synth"/>
</dbReference>
<dbReference type="InterPro" id="IPR020058">
    <property type="entry name" value="Glu/Gln-tRNA-synth_Ib_cat-dom"/>
</dbReference>
<dbReference type="InterPro" id="IPR049940">
    <property type="entry name" value="GluQ/Sye"/>
</dbReference>
<dbReference type="InterPro" id="IPR033910">
    <property type="entry name" value="GluRS_core"/>
</dbReference>
<dbReference type="InterPro" id="IPR014729">
    <property type="entry name" value="Rossmann-like_a/b/a_fold"/>
</dbReference>
<dbReference type="NCBIfam" id="TIGR00464">
    <property type="entry name" value="gltX_bact"/>
    <property type="match status" value="1"/>
</dbReference>
<dbReference type="PANTHER" id="PTHR43311">
    <property type="entry name" value="GLUTAMATE--TRNA LIGASE"/>
    <property type="match status" value="1"/>
</dbReference>
<dbReference type="PANTHER" id="PTHR43311:SF2">
    <property type="entry name" value="GLUTAMATE--TRNA LIGASE, MITOCHONDRIAL-RELATED"/>
    <property type="match status" value="1"/>
</dbReference>
<dbReference type="Pfam" id="PF19269">
    <property type="entry name" value="Anticodon_2"/>
    <property type="match status" value="1"/>
</dbReference>
<dbReference type="Pfam" id="PF00749">
    <property type="entry name" value="tRNA-synt_1c"/>
    <property type="match status" value="1"/>
</dbReference>
<dbReference type="PRINTS" id="PR00987">
    <property type="entry name" value="TRNASYNTHGLU"/>
</dbReference>
<dbReference type="SUPFAM" id="SSF48163">
    <property type="entry name" value="An anticodon-binding domain of class I aminoacyl-tRNA synthetases"/>
    <property type="match status" value="1"/>
</dbReference>
<dbReference type="SUPFAM" id="SSF52374">
    <property type="entry name" value="Nucleotidylyl transferase"/>
    <property type="match status" value="1"/>
</dbReference>
<dbReference type="PROSITE" id="PS00178">
    <property type="entry name" value="AA_TRNA_LIGASE_I"/>
    <property type="match status" value="1"/>
</dbReference>